<comment type="function">
    <text evidence="1">IGPS catalyzes the conversion of PRFAR and glutamine to IGP, AICAR and glutamate. The HisF subunit catalyzes the cyclization activity that produces IGP and AICAR from PRFAR using the ammonia provided by the HisH subunit.</text>
</comment>
<comment type="catalytic activity">
    <reaction evidence="1">
        <text>5-[(5-phospho-1-deoxy-D-ribulos-1-ylimino)methylamino]-1-(5-phospho-beta-D-ribosyl)imidazole-4-carboxamide + L-glutamine = D-erythro-1-(imidazol-4-yl)glycerol 3-phosphate + 5-amino-1-(5-phospho-beta-D-ribosyl)imidazole-4-carboxamide + L-glutamate + H(+)</text>
        <dbReference type="Rhea" id="RHEA:24793"/>
        <dbReference type="ChEBI" id="CHEBI:15378"/>
        <dbReference type="ChEBI" id="CHEBI:29985"/>
        <dbReference type="ChEBI" id="CHEBI:58278"/>
        <dbReference type="ChEBI" id="CHEBI:58359"/>
        <dbReference type="ChEBI" id="CHEBI:58475"/>
        <dbReference type="ChEBI" id="CHEBI:58525"/>
        <dbReference type="EC" id="4.3.2.10"/>
    </reaction>
</comment>
<comment type="pathway">
    <text evidence="1">Amino-acid biosynthesis; L-histidine biosynthesis; L-histidine from 5-phospho-alpha-D-ribose 1-diphosphate: step 5/9.</text>
</comment>
<comment type="subunit">
    <text evidence="1">Heterodimer of HisH and HisF.</text>
</comment>
<comment type="subcellular location">
    <subcellularLocation>
        <location evidence="1">Cytoplasm</location>
    </subcellularLocation>
</comment>
<comment type="similarity">
    <text evidence="1">Belongs to the HisA/HisF family.</text>
</comment>
<evidence type="ECO:0000255" key="1">
    <source>
        <dbReference type="HAMAP-Rule" id="MF_01013"/>
    </source>
</evidence>
<feature type="chain" id="PRO_0000319448" description="Imidazole glycerol phosphate synthase subunit HisF">
    <location>
        <begin position="1"/>
        <end position="267"/>
    </location>
</feature>
<feature type="active site" evidence="1">
    <location>
        <position position="21"/>
    </location>
</feature>
<feature type="active site" evidence="1">
    <location>
        <position position="140"/>
    </location>
</feature>
<proteinExistence type="inferred from homology"/>
<name>HIS6_BORA1</name>
<reference key="1">
    <citation type="journal article" date="2006" name="J. Bacteriol.">
        <title>Comparison of the genome sequence of the poultry pathogen Bordetella avium with those of B. bronchiseptica, B. pertussis, and B. parapertussis reveals extensive diversity in surface structures associated with host interaction.</title>
        <authorList>
            <person name="Sebaihia M."/>
            <person name="Preston A."/>
            <person name="Maskell D.J."/>
            <person name="Kuzmiak H."/>
            <person name="Connell T.D."/>
            <person name="King N.D."/>
            <person name="Orndorff P.E."/>
            <person name="Miyamoto D.M."/>
            <person name="Thomson N.R."/>
            <person name="Harris D."/>
            <person name="Goble A."/>
            <person name="Lord A."/>
            <person name="Murphy L."/>
            <person name="Quail M.A."/>
            <person name="Rutter S."/>
            <person name="Squares R."/>
            <person name="Squares S."/>
            <person name="Woodward J."/>
            <person name="Parkhill J."/>
            <person name="Temple L.M."/>
        </authorList>
    </citation>
    <scope>NUCLEOTIDE SEQUENCE [LARGE SCALE GENOMIC DNA]</scope>
    <source>
        <strain>197N</strain>
    </source>
</reference>
<gene>
    <name evidence="1" type="primary">hisF</name>
    <name type="ordered locus">BAV3319</name>
</gene>
<protein>
    <recommendedName>
        <fullName evidence="1">Imidazole glycerol phosphate synthase subunit HisF</fullName>
        <ecNumber evidence="1">4.3.2.10</ecNumber>
    </recommendedName>
    <alternativeName>
        <fullName evidence="1">IGP synthase cyclase subunit</fullName>
    </alternativeName>
    <alternativeName>
        <fullName evidence="1">IGP synthase subunit HisF</fullName>
    </alternativeName>
    <alternativeName>
        <fullName evidence="1">ImGP synthase subunit HisF</fullName>
        <shortName evidence="1">IGPS subunit HisF</shortName>
    </alternativeName>
</protein>
<sequence>MTQTQGPTASALTRRIIPCLDVTAGRVVKGVNFVNLTDAGDPVEIARRYNEQGADELTFLDITATSDGRDLILPIIEQVASQVFIPLTVGGGVRQVSDVQRLLNAGADKISINSAAISNPELVRAAADYHGSQCIVVAIDARRVSSEGEAARWEVFTHGGRRATGLDAVAWARRMAAYGAGEILLTSMDRDGTKSGFDLELTRTVSDAVPVPVIASGGVGNLEHLAEGVTTGRASAVLAASIFHFGQHTVRECKAFMAQRGIDVRLD</sequence>
<keyword id="KW-0028">Amino-acid biosynthesis</keyword>
<keyword id="KW-0963">Cytoplasm</keyword>
<keyword id="KW-0368">Histidine biosynthesis</keyword>
<keyword id="KW-0456">Lyase</keyword>
<keyword id="KW-1185">Reference proteome</keyword>
<accession>Q2KTT1</accession>
<organism>
    <name type="scientific">Bordetella avium (strain 197N)</name>
    <dbReference type="NCBI Taxonomy" id="360910"/>
    <lineage>
        <taxon>Bacteria</taxon>
        <taxon>Pseudomonadati</taxon>
        <taxon>Pseudomonadota</taxon>
        <taxon>Betaproteobacteria</taxon>
        <taxon>Burkholderiales</taxon>
        <taxon>Alcaligenaceae</taxon>
        <taxon>Bordetella</taxon>
    </lineage>
</organism>
<dbReference type="EC" id="4.3.2.10" evidence="1"/>
<dbReference type="EMBL" id="AM167904">
    <property type="protein sequence ID" value="CAJ50929.1"/>
    <property type="molecule type" value="Genomic_DNA"/>
</dbReference>
<dbReference type="RefSeq" id="WP_012418956.1">
    <property type="nucleotide sequence ID" value="NC_010645.1"/>
</dbReference>
<dbReference type="SMR" id="Q2KTT1"/>
<dbReference type="STRING" id="360910.BAV3319"/>
<dbReference type="GeneID" id="92933422"/>
<dbReference type="KEGG" id="bav:BAV3319"/>
<dbReference type="eggNOG" id="COG0107">
    <property type="taxonomic scope" value="Bacteria"/>
</dbReference>
<dbReference type="HOGENOM" id="CLU_048577_4_0_4"/>
<dbReference type="OrthoDB" id="9781903at2"/>
<dbReference type="UniPathway" id="UPA00031">
    <property type="reaction ID" value="UER00010"/>
</dbReference>
<dbReference type="Proteomes" id="UP000001977">
    <property type="component" value="Chromosome"/>
</dbReference>
<dbReference type="GO" id="GO:0005737">
    <property type="term" value="C:cytoplasm"/>
    <property type="evidence" value="ECO:0007669"/>
    <property type="project" value="UniProtKB-SubCell"/>
</dbReference>
<dbReference type="GO" id="GO:0000107">
    <property type="term" value="F:imidazoleglycerol-phosphate synthase activity"/>
    <property type="evidence" value="ECO:0007669"/>
    <property type="project" value="UniProtKB-UniRule"/>
</dbReference>
<dbReference type="GO" id="GO:0016829">
    <property type="term" value="F:lyase activity"/>
    <property type="evidence" value="ECO:0007669"/>
    <property type="project" value="UniProtKB-KW"/>
</dbReference>
<dbReference type="GO" id="GO:0000105">
    <property type="term" value="P:L-histidine biosynthetic process"/>
    <property type="evidence" value="ECO:0007669"/>
    <property type="project" value="UniProtKB-UniRule"/>
</dbReference>
<dbReference type="CDD" id="cd04731">
    <property type="entry name" value="HisF"/>
    <property type="match status" value="1"/>
</dbReference>
<dbReference type="FunFam" id="3.20.20.70:FF:000006">
    <property type="entry name" value="Imidazole glycerol phosphate synthase subunit HisF"/>
    <property type="match status" value="1"/>
</dbReference>
<dbReference type="Gene3D" id="3.20.20.70">
    <property type="entry name" value="Aldolase class I"/>
    <property type="match status" value="1"/>
</dbReference>
<dbReference type="HAMAP" id="MF_01013">
    <property type="entry name" value="HisF"/>
    <property type="match status" value="1"/>
</dbReference>
<dbReference type="InterPro" id="IPR013785">
    <property type="entry name" value="Aldolase_TIM"/>
</dbReference>
<dbReference type="InterPro" id="IPR006062">
    <property type="entry name" value="His_biosynth"/>
</dbReference>
<dbReference type="InterPro" id="IPR004651">
    <property type="entry name" value="HisF"/>
</dbReference>
<dbReference type="InterPro" id="IPR050064">
    <property type="entry name" value="IGPS_HisA/HisF"/>
</dbReference>
<dbReference type="InterPro" id="IPR011060">
    <property type="entry name" value="RibuloseP-bd_barrel"/>
</dbReference>
<dbReference type="NCBIfam" id="TIGR00735">
    <property type="entry name" value="hisF"/>
    <property type="match status" value="1"/>
</dbReference>
<dbReference type="PANTHER" id="PTHR21235:SF2">
    <property type="entry name" value="IMIDAZOLE GLYCEROL PHOSPHATE SYNTHASE HISHF"/>
    <property type="match status" value="1"/>
</dbReference>
<dbReference type="PANTHER" id="PTHR21235">
    <property type="entry name" value="IMIDAZOLE GLYCEROL PHOSPHATE SYNTHASE SUBUNIT HISF/H IGP SYNTHASE SUBUNIT HISF/H"/>
    <property type="match status" value="1"/>
</dbReference>
<dbReference type="Pfam" id="PF00977">
    <property type="entry name" value="His_biosynth"/>
    <property type="match status" value="1"/>
</dbReference>
<dbReference type="SUPFAM" id="SSF51366">
    <property type="entry name" value="Ribulose-phoshate binding barrel"/>
    <property type="match status" value="1"/>
</dbReference>